<organism>
    <name type="scientific">Oryza sativa subsp. japonica</name>
    <name type="common">Rice</name>
    <dbReference type="NCBI Taxonomy" id="39947"/>
    <lineage>
        <taxon>Eukaryota</taxon>
        <taxon>Viridiplantae</taxon>
        <taxon>Streptophyta</taxon>
        <taxon>Embryophyta</taxon>
        <taxon>Tracheophyta</taxon>
        <taxon>Spermatophyta</taxon>
        <taxon>Magnoliopsida</taxon>
        <taxon>Liliopsida</taxon>
        <taxon>Poales</taxon>
        <taxon>Poaceae</taxon>
        <taxon>BOP clade</taxon>
        <taxon>Oryzoideae</taxon>
        <taxon>Oryzeae</taxon>
        <taxon>Oryzinae</taxon>
        <taxon>Oryza</taxon>
        <taxon>Oryza sativa</taxon>
    </lineage>
</organism>
<accession>P56724</accession>
<accession>Q0D9S5</accession>
<accession>Q5Z8Y2</accession>
<comment type="function">
    <text>Plays an important role in the elongation step of protein synthesis.</text>
</comment>
<comment type="PTM">
    <text evidence="1">Phosphorylated.</text>
</comment>
<comment type="similarity">
    <text evidence="3">Belongs to the eukaryotic ribosomal protein P1/P2 family.</text>
</comment>
<comment type="sequence caution" evidence="3">
    <conflict type="miscellaneous discrepancy">
        <sequence resource="EMBL" id="D15754"/>
    </conflict>
    <text>Sequencing errors.</text>
</comment>
<sequence length="119" mass="11894">MGVYTFVCRSSGDEWTAKQLKGELEASAATPYELQRRLVAAASAADSAAGVQSSFSMVSPSSAVFQVIIGAVGGGAAIGGGAAAGAASGGAAAEAPKAEEKKEEEKEESEDDLGFSLFD</sequence>
<evidence type="ECO:0000250" key="1"/>
<evidence type="ECO:0000256" key="2">
    <source>
        <dbReference type="SAM" id="MobiDB-lite"/>
    </source>
</evidence>
<evidence type="ECO:0000305" key="3"/>
<reference key="1">
    <citation type="journal article" date="2005" name="Nature">
        <title>The map-based sequence of the rice genome.</title>
        <authorList>
            <consortium name="International rice genome sequencing project (IRGSP)"/>
        </authorList>
    </citation>
    <scope>NUCLEOTIDE SEQUENCE [LARGE SCALE GENOMIC DNA]</scope>
    <source>
        <strain>cv. Nipponbare</strain>
    </source>
</reference>
<reference key="2">
    <citation type="journal article" date="2008" name="Nucleic Acids Res.">
        <title>The rice annotation project database (RAP-DB): 2008 update.</title>
        <authorList>
            <consortium name="The rice annotation project (RAP)"/>
        </authorList>
    </citation>
    <scope>GENOME REANNOTATION</scope>
    <source>
        <strain>cv. Nipponbare</strain>
    </source>
</reference>
<reference key="3">
    <citation type="journal article" date="2013" name="Rice">
        <title>Improvement of the Oryza sativa Nipponbare reference genome using next generation sequence and optical map data.</title>
        <authorList>
            <person name="Kawahara Y."/>
            <person name="de la Bastide M."/>
            <person name="Hamilton J.P."/>
            <person name="Kanamori H."/>
            <person name="McCombie W.R."/>
            <person name="Ouyang S."/>
            <person name="Schwartz D.C."/>
            <person name="Tanaka T."/>
            <person name="Wu J."/>
            <person name="Zhou S."/>
            <person name="Childs K.L."/>
            <person name="Davidson R.M."/>
            <person name="Lin H."/>
            <person name="Quesada-Ocampo L."/>
            <person name="Vaillancourt B."/>
            <person name="Sakai H."/>
            <person name="Lee S.S."/>
            <person name="Kim J."/>
            <person name="Numa H."/>
            <person name="Itoh T."/>
            <person name="Buell C.R."/>
            <person name="Matsumoto T."/>
        </authorList>
    </citation>
    <scope>GENOME REANNOTATION</scope>
    <source>
        <strain>cv. Nipponbare</strain>
    </source>
</reference>
<reference key="4">
    <citation type="journal article" date="2003" name="Science">
        <title>Collection, mapping, and annotation of over 28,000 cDNA clones from japonica rice.</title>
        <authorList>
            <consortium name="The rice full-length cDNA consortium"/>
        </authorList>
    </citation>
    <scope>NUCLEOTIDE SEQUENCE [LARGE SCALE MRNA]</scope>
    <source>
        <strain>cv. Nipponbare</strain>
    </source>
</reference>
<reference key="5">
    <citation type="journal article" date="1994" name="Plant J.">
        <title>Toward cataloguing all rice genes: large-scale sequencing of randomly chosen rice cDNAs from a callus cDNA library.</title>
        <authorList>
            <person name="Sasaki T."/>
            <person name="Song J."/>
            <person name="Koga-Ban Y."/>
            <person name="Matsui E."/>
            <person name="Fang F."/>
            <person name="Higo H."/>
            <person name="Nagasaki H."/>
            <person name="Hori M."/>
            <person name="Miya M."/>
            <person name="Murayama-Kayano E."/>
            <person name="Takiguchi T."/>
            <person name="Takasuga A."/>
            <person name="Niki T."/>
            <person name="Ishimaru K."/>
            <person name="Ikeda H."/>
            <person name="Yamamoto Y."/>
            <person name="Mukai Y."/>
            <person name="Ohta I."/>
            <person name="Miyadera N."/>
            <person name="Havukkala I."/>
            <person name="Minobe Y."/>
        </authorList>
    </citation>
    <scope>NUCLEOTIDE SEQUENCE [LARGE SCALE MRNA]</scope>
    <source>
        <strain>cv. Nipponbare</strain>
        <tissue>Callus</tissue>
    </source>
</reference>
<gene>
    <name type="ordered locus">Os06g0701400</name>
    <name type="ordered locus">LOC_Os06g48780</name>
    <name type="ORF">P0596H10.6</name>
</gene>
<name>RLA3_ORYSJ</name>
<dbReference type="EMBL" id="AP003726">
    <property type="protein sequence ID" value="BAD53772.1"/>
    <property type="molecule type" value="Genomic_DNA"/>
</dbReference>
<dbReference type="EMBL" id="AP008212">
    <property type="protein sequence ID" value="BAF20398.1"/>
    <property type="molecule type" value="Genomic_DNA"/>
</dbReference>
<dbReference type="EMBL" id="AP014962">
    <property type="protein sequence ID" value="BAS99350.1"/>
    <property type="molecule type" value="Genomic_DNA"/>
</dbReference>
<dbReference type="EMBL" id="AK121229">
    <property type="protein sequence ID" value="BAH00384.1"/>
    <property type="molecule type" value="mRNA"/>
</dbReference>
<dbReference type="EMBL" id="D15754">
    <property type="status" value="NOT_ANNOTATED_CDS"/>
    <property type="molecule type" value="mRNA"/>
</dbReference>
<dbReference type="RefSeq" id="XP_015641043.1">
    <property type="nucleotide sequence ID" value="XM_015785557.1"/>
</dbReference>
<dbReference type="FunCoup" id="P56724">
    <property type="interactions" value="633"/>
</dbReference>
<dbReference type="STRING" id="39947.P56724"/>
<dbReference type="iPTMnet" id="P56724"/>
<dbReference type="PaxDb" id="39947-P56724"/>
<dbReference type="EnsemblPlants" id="Os06t0701400-01">
    <property type="protein sequence ID" value="Os06t0701400-01"/>
    <property type="gene ID" value="Os06g0701400"/>
</dbReference>
<dbReference type="Gramene" id="Os06t0701400-01">
    <property type="protein sequence ID" value="Os06t0701400-01"/>
    <property type="gene ID" value="Os06g0701400"/>
</dbReference>
<dbReference type="KEGG" id="dosa:Os06g0701400"/>
<dbReference type="eggNOG" id="ENOG502S1SG">
    <property type="taxonomic scope" value="Eukaryota"/>
</dbReference>
<dbReference type="HOGENOM" id="CLU_2053070_0_0_1"/>
<dbReference type="InParanoid" id="P56724"/>
<dbReference type="OMA" id="EWNAKQL"/>
<dbReference type="OrthoDB" id="2015129at2759"/>
<dbReference type="Proteomes" id="UP000000763">
    <property type="component" value="Chromosome 6"/>
</dbReference>
<dbReference type="Proteomes" id="UP000059680">
    <property type="component" value="Chromosome 6"/>
</dbReference>
<dbReference type="GO" id="GO:1990904">
    <property type="term" value="C:ribonucleoprotein complex"/>
    <property type="evidence" value="ECO:0007669"/>
    <property type="project" value="UniProtKB-KW"/>
</dbReference>
<dbReference type="GO" id="GO:0005840">
    <property type="term" value="C:ribosome"/>
    <property type="evidence" value="ECO:0007669"/>
    <property type="project" value="UniProtKB-KW"/>
</dbReference>
<dbReference type="GO" id="GO:0003735">
    <property type="term" value="F:structural constituent of ribosome"/>
    <property type="evidence" value="ECO:0007669"/>
    <property type="project" value="InterPro"/>
</dbReference>
<dbReference type="GO" id="GO:0006414">
    <property type="term" value="P:translational elongation"/>
    <property type="evidence" value="ECO:0007669"/>
    <property type="project" value="InterPro"/>
</dbReference>
<dbReference type="HAMAP" id="MF_01478">
    <property type="entry name" value="Ribosomal_L12_arch"/>
    <property type="match status" value="1"/>
</dbReference>
<dbReference type="InterPro" id="IPR027534">
    <property type="entry name" value="Ribosomal_P1/P2"/>
</dbReference>
<dbReference type="InterPro" id="IPR044252">
    <property type="entry name" value="RPP3"/>
</dbReference>
<dbReference type="PANTHER" id="PTHR47207">
    <property type="entry name" value="60S ACIDIC RIBOSOMAL PROTEIN P3-1-RELATED"/>
    <property type="match status" value="1"/>
</dbReference>
<dbReference type="PANTHER" id="PTHR47207:SF2">
    <property type="entry name" value="LARGE RIBOSOMAL SUBUNIT PROTEIN P3Y-RELATED"/>
    <property type="match status" value="1"/>
</dbReference>
<dbReference type="Pfam" id="PF00428">
    <property type="entry name" value="Ribosomal_60s"/>
    <property type="match status" value="1"/>
</dbReference>
<keyword id="KW-0597">Phosphoprotein</keyword>
<keyword id="KW-1185">Reference proteome</keyword>
<keyword id="KW-0687">Ribonucleoprotein</keyword>
<keyword id="KW-0689">Ribosomal protein</keyword>
<feature type="initiator methionine" description="Removed" evidence="1">
    <location>
        <position position="1"/>
    </location>
</feature>
<feature type="chain" id="PRO_0000157671" description="Large ribosomal subunit protein P3">
    <location>
        <begin position="2"/>
        <end position="119"/>
    </location>
</feature>
<feature type="region of interest" description="Disordered" evidence="2">
    <location>
        <begin position="81"/>
        <end position="119"/>
    </location>
</feature>
<feature type="compositionally biased region" description="Low complexity" evidence="2">
    <location>
        <begin position="84"/>
        <end position="95"/>
    </location>
</feature>
<proteinExistence type="inferred from homology"/>
<protein>
    <recommendedName>
        <fullName evidence="3">Large ribosomal subunit protein P3</fullName>
    </recommendedName>
    <alternativeName>
        <fullName>60S acidic ribosomal protein P3</fullName>
    </alternativeName>
    <alternativeName>
        <fullName>P1/P2-like</fullName>
    </alternativeName>
</protein>